<protein>
    <recommendedName>
        <fullName evidence="1">Large ribosomal subunit protein uL18</fullName>
    </recommendedName>
    <alternativeName>
        <fullName evidence="2">50S ribosomal protein L18</fullName>
    </alternativeName>
</protein>
<gene>
    <name evidence="1" type="primary">rplR</name>
    <name type="ordered locus">YpAngola_A0599</name>
</gene>
<comment type="function">
    <text evidence="1">This is one of the proteins that bind and probably mediate the attachment of the 5S RNA into the large ribosomal subunit, where it forms part of the central protuberance.</text>
</comment>
<comment type="subunit">
    <text evidence="1">Part of the 50S ribosomal subunit; part of the 5S rRNA/L5/L18/L25 subcomplex. Contacts the 5S and 23S rRNAs.</text>
</comment>
<comment type="similarity">
    <text evidence="1">Belongs to the universal ribosomal protein uL18 family.</text>
</comment>
<sequence length="117" mass="12811">MDKKAARIRRATRARRKLKELGATRLVVHRTPRHIYAQVIAPNGSEILVAASTVEKAINEQLKYAGNKDAAAAVGKTIAERALEKGITKVSFDRSGFQYHGRVQALADAAREAGLQF</sequence>
<accession>A9R911</accession>
<keyword id="KW-0687">Ribonucleoprotein</keyword>
<keyword id="KW-0689">Ribosomal protein</keyword>
<keyword id="KW-0694">RNA-binding</keyword>
<keyword id="KW-0699">rRNA-binding</keyword>
<feature type="chain" id="PRO_1000142745" description="Large ribosomal subunit protein uL18">
    <location>
        <begin position="1"/>
        <end position="117"/>
    </location>
</feature>
<organism>
    <name type="scientific">Yersinia pestis bv. Antiqua (strain Angola)</name>
    <dbReference type="NCBI Taxonomy" id="349746"/>
    <lineage>
        <taxon>Bacteria</taxon>
        <taxon>Pseudomonadati</taxon>
        <taxon>Pseudomonadota</taxon>
        <taxon>Gammaproteobacteria</taxon>
        <taxon>Enterobacterales</taxon>
        <taxon>Yersiniaceae</taxon>
        <taxon>Yersinia</taxon>
    </lineage>
</organism>
<reference key="1">
    <citation type="journal article" date="2010" name="J. Bacteriol.">
        <title>Genome sequence of the deep-rooted Yersinia pestis strain Angola reveals new insights into the evolution and pangenome of the plague bacterium.</title>
        <authorList>
            <person name="Eppinger M."/>
            <person name="Worsham P.L."/>
            <person name="Nikolich M.P."/>
            <person name="Riley D.R."/>
            <person name="Sebastian Y."/>
            <person name="Mou S."/>
            <person name="Achtman M."/>
            <person name="Lindler L.E."/>
            <person name="Ravel J."/>
        </authorList>
    </citation>
    <scope>NUCLEOTIDE SEQUENCE [LARGE SCALE GENOMIC DNA]</scope>
    <source>
        <strain>Angola</strain>
    </source>
</reference>
<dbReference type="EMBL" id="CP000901">
    <property type="protein sequence ID" value="ABX85535.1"/>
    <property type="molecule type" value="Genomic_DNA"/>
</dbReference>
<dbReference type="RefSeq" id="WP_002213336.1">
    <property type="nucleotide sequence ID" value="NZ_CP009935.1"/>
</dbReference>
<dbReference type="SMR" id="A9R911"/>
<dbReference type="GeneID" id="97454247"/>
<dbReference type="KEGG" id="ypg:YpAngola_A0599"/>
<dbReference type="PATRIC" id="fig|349746.12.peg.1549"/>
<dbReference type="GO" id="GO:0022625">
    <property type="term" value="C:cytosolic large ribosomal subunit"/>
    <property type="evidence" value="ECO:0007669"/>
    <property type="project" value="TreeGrafter"/>
</dbReference>
<dbReference type="GO" id="GO:0008097">
    <property type="term" value="F:5S rRNA binding"/>
    <property type="evidence" value="ECO:0007669"/>
    <property type="project" value="TreeGrafter"/>
</dbReference>
<dbReference type="GO" id="GO:0003735">
    <property type="term" value="F:structural constituent of ribosome"/>
    <property type="evidence" value="ECO:0007669"/>
    <property type="project" value="InterPro"/>
</dbReference>
<dbReference type="GO" id="GO:0006412">
    <property type="term" value="P:translation"/>
    <property type="evidence" value="ECO:0007669"/>
    <property type="project" value="UniProtKB-UniRule"/>
</dbReference>
<dbReference type="CDD" id="cd00432">
    <property type="entry name" value="Ribosomal_L18_L5e"/>
    <property type="match status" value="1"/>
</dbReference>
<dbReference type="FunFam" id="3.30.420.100:FF:000001">
    <property type="entry name" value="50S ribosomal protein L18"/>
    <property type="match status" value="1"/>
</dbReference>
<dbReference type="Gene3D" id="3.30.420.100">
    <property type="match status" value="1"/>
</dbReference>
<dbReference type="HAMAP" id="MF_01337_B">
    <property type="entry name" value="Ribosomal_uL18_B"/>
    <property type="match status" value="1"/>
</dbReference>
<dbReference type="InterPro" id="IPR004389">
    <property type="entry name" value="Ribosomal_uL18_bac-type"/>
</dbReference>
<dbReference type="InterPro" id="IPR005484">
    <property type="entry name" value="Ribosomal_uL18_bac/euk"/>
</dbReference>
<dbReference type="NCBIfam" id="TIGR00060">
    <property type="entry name" value="L18_bact"/>
    <property type="match status" value="1"/>
</dbReference>
<dbReference type="PANTHER" id="PTHR12899">
    <property type="entry name" value="39S RIBOSOMAL PROTEIN L18, MITOCHONDRIAL"/>
    <property type="match status" value="1"/>
</dbReference>
<dbReference type="PANTHER" id="PTHR12899:SF3">
    <property type="entry name" value="LARGE RIBOSOMAL SUBUNIT PROTEIN UL18M"/>
    <property type="match status" value="1"/>
</dbReference>
<dbReference type="Pfam" id="PF00861">
    <property type="entry name" value="Ribosomal_L18p"/>
    <property type="match status" value="1"/>
</dbReference>
<dbReference type="SUPFAM" id="SSF53137">
    <property type="entry name" value="Translational machinery components"/>
    <property type="match status" value="1"/>
</dbReference>
<name>RL18_YERPG</name>
<evidence type="ECO:0000255" key="1">
    <source>
        <dbReference type="HAMAP-Rule" id="MF_01337"/>
    </source>
</evidence>
<evidence type="ECO:0000305" key="2"/>
<proteinExistence type="inferred from homology"/>